<accession>P62740</accession>
<accession>P03996</accession>
<accession>P04108</accession>
<feature type="initiator methionine" description="Removed" evidence="2">
    <location>
        <position position="1"/>
    </location>
</feature>
<feature type="chain" id="PRO_0000442607" description="Actin, aortic smooth muscle, intermediate form" evidence="3">
    <location>
        <begin position="2"/>
        <end position="377"/>
    </location>
</feature>
<feature type="chain" id="PRO_0000442608" description="Actin, aortic smooth muscle">
    <location>
        <begin position="3"/>
        <end position="377"/>
    </location>
</feature>
<feature type="modified residue" description="N-acetylcysteine; in intermediate form" evidence="3">
    <location>
        <position position="2"/>
    </location>
</feature>
<feature type="modified residue" description="Methionine (R)-sulfoxide" evidence="3">
    <location>
        <position position="46"/>
    </location>
</feature>
<feature type="modified residue" description="Methionine (R)-sulfoxide" evidence="3">
    <location>
        <position position="49"/>
    </location>
</feature>
<feature type="modified residue" description="Tele-methylhistidine" evidence="4">
    <location>
        <position position="75"/>
    </location>
</feature>
<feature type="modified residue" description="N6-methyllysine" evidence="5">
    <location>
        <position position="86"/>
    </location>
</feature>
<proteinExistence type="evidence at transcript level"/>
<comment type="function">
    <text>Actins are highly conserved proteins that are involved in various types of cell motility and are ubiquitously expressed in all eukaryotic cells.</text>
</comment>
<comment type="catalytic activity">
    <reaction evidence="6">
        <text>ATP + H2O = ADP + phosphate + H(+)</text>
        <dbReference type="Rhea" id="RHEA:13065"/>
        <dbReference type="ChEBI" id="CHEBI:15377"/>
        <dbReference type="ChEBI" id="CHEBI:15378"/>
        <dbReference type="ChEBI" id="CHEBI:30616"/>
        <dbReference type="ChEBI" id="CHEBI:43474"/>
        <dbReference type="ChEBI" id="CHEBI:456216"/>
    </reaction>
</comment>
<comment type="subunit">
    <text>Polymerization of globular actin (G-actin) leads to a structural filament (F-actin) in the form of a two-stranded helix. Each actin can bind to 4 others.</text>
</comment>
<comment type="subcellular location">
    <subcellularLocation>
        <location>Cytoplasm</location>
        <location>Cytoskeleton</location>
    </subcellularLocation>
</comment>
<comment type="PTM">
    <molecule>Actin, aortic smooth muscle, intermediate form</molecule>
    <text evidence="3">N-terminal cleavage of acetylated cysteine of intermediate muscle actin by ACTMAP.</text>
</comment>
<comment type="PTM">
    <text evidence="3">Oxidation of Met-46 and Met-49 by MICALs (MICAL1, MICAL2 or MICAL3) to form methionine sulfoxide promotes actin filament depolymerization. MICAL1 and MICAL2 produce the (R)-S-oxide form. The (R)-S-oxide form is reverted by MSRB1 and MSRB2, which promotes actin repolymerization.</text>
</comment>
<comment type="PTM">
    <text evidence="1">Monomethylation at Lys-86 (K84me1) regulates actin-myosin interaction and actomyosin-dependent processes. Demethylation by ALKBH4 is required for maintaining actomyosin dynamics supporting normal cleavage furrow ingression during cytokinesis and cell migration (By similarity).</text>
</comment>
<comment type="PTM">
    <text evidence="2">Methylated at His-75 by SETD3.</text>
</comment>
<comment type="miscellaneous">
    <text>In vertebrates 3 main groups of actin isoforms, alpha, beta and gamma have been identified. The alpha actins are found in muscle tissues and are a major constituent of the contractile apparatus. The beta and gamma actins coexist in most cell types as components of the cytoskeleton and as mediators of internal cell motility.</text>
</comment>
<comment type="similarity">
    <text evidence="7">Belongs to the actin family.</text>
</comment>
<dbReference type="EC" id="3.6.4.-" evidence="6"/>
<dbReference type="EMBL" id="X60732">
    <property type="protein sequence ID" value="CAA43139.1"/>
    <property type="molecule type" value="mRNA"/>
</dbReference>
<dbReference type="PIR" id="JH0636">
    <property type="entry name" value="ATRBSM"/>
</dbReference>
<dbReference type="RefSeq" id="NP_001095152.1">
    <property type="nucleotide sequence ID" value="NM_001101682.2"/>
</dbReference>
<dbReference type="RefSeq" id="XP_069913095.1">
    <property type="nucleotide sequence ID" value="XM_070056994.1"/>
</dbReference>
<dbReference type="SMR" id="P62740"/>
<dbReference type="BioGRID" id="1172292">
    <property type="interactions" value="4"/>
</dbReference>
<dbReference type="FunCoup" id="P62740">
    <property type="interactions" value="82"/>
</dbReference>
<dbReference type="MINT" id="P62740"/>
<dbReference type="STRING" id="9986.ENSOCUP00000007086"/>
<dbReference type="PaxDb" id="9986-ENSOCUP00000007086"/>
<dbReference type="GeneID" id="100009271"/>
<dbReference type="KEGG" id="ocu:100009271"/>
<dbReference type="CTD" id="59"/>
<dbReference type="eggNOG" id="KOG0676">
    <property type="taxonomic scope" value="Eukaryota"/>
</dbReference>
<dbReference type="InParanoid" id="P62740"/>
<dbReference type="OrthoDB" id="9545632at2759"/>
<dbReference type="TreeFam" id="TF354237"/>
<dbReference type="Proteomes" id="UP000001811">
    <property type="component" value="Unplaced"/>
</dbReference>
<dbReference type="GO" id="GO:0044297">
    <property type="term" value="C:cell body"/>
    <property type="evidence" value="ECO:0000250"/>
    <property type="project" value="AgBase"/>
</dbReference>
<dbReference type="GO" id="GO:0005737">
    <property type="term" value="C:cytoplasm"/>
    <property type="evidence" value="ECO:0000250"/>
    <property type="project" value="AgBase"/>
</dbReference>
<dbReference type="GO" id="GO:0005856">
    <property type="term" value="C:cytoskeleton"/>
    <property type="evidence" value="ECO:0007669"/>
    <property type="project" value="UniProtKB-SubCell"/>
</dbReference>
<dbReference type="GO" id="GO:0030175">
    <property type="term" value="C:filopodium"/>
    <property type="evidence" value="ECO:0000250"/>
    <property type="project" value="AgBase"/>
</dbReference>
<dbReference type="GO" id="GO:0030027">
    <property type="term" value="C:lamellipodium"/>
    <property type="evidence" value="ECO:0000250"/>
    <property type="project" value="AgBase"/>
</dbReference>
<dbReference type="GO" id="GO:0005524">
    <property type="term" value="F:ATP binding"/>
    <property type="evidence" value="ECO:0007669"/>
    <property type="project" value="UniProtKB-KW"/>
</dbReference>
<dbReference type="GO" id="GO:0016787">
    <property type="term" value="F:hydrolase activity"/>
    <property type="evidence" value="ECO:0007669"/>
    <property type="project" value="UniProtKB-KW"/>
</dbReference>
<dbReference type="GO" id="GO:0005200">
    <property type="term" value="F:structural constituent of cytoskeleton"/>
    <property type="evidence" value="ECO:0000303"/>
    <property type="project" value="UniProtKB"/>
</dbReference>
<dbReference type="GO" id="GO:0090131">
    <property type="term" value="P:mesenchyme migration"/>
    <property type="evidence" value="ECO:0000250"/>
    <property type="project" value="AgBase"/>
</dbReference>
<dbReference type="GO" id="GO:0010628">
    <property type="term" value="P:positive regulation of gene expression"/>
    <property type="evidence" value="ECO:0000250"/>
    <property type="project" value="AgBase"/>
</dbReference>
<dbReference type="CDD" id="cd10224">
    <property type="entry name" value="ASKHA_NBD_actin"/>
    <property type="match status" value="1"/>
</dbReference>
<dbReference type="FunFam" id="3.30.420.40:FF:000131">
    <property type="entry name" value="Actin, alpha skeletal muscle"/>
    <property type="match status" value="1"/>
</dbReference>
<dbReference type="FunFam" id="3.30.420.40:FF:000291">
    <property type="entry name" value="Actin, alpha skeletal muscle"/>
    <property type="match status" value="1"/>
</dbReference>
<dbReference type="FunFam" id="3.90.640.10:FF:000047">
    <property type="entry name" value="Actin, alpha skeletal muscle"/>
    <property type="match status" value="1"/>
</dbReference>
<dbReference type="FunFam" id="3.30.420.40:FF:000058">
    <property type="entry name" value="Putative actin-related protein 5"/>
    <property type="match status" value="1"/>
</dbReference>
<dbReference type="Gene3D" id="3.30.420.40">
    <property type="match status" value="2"/>
</dbReference>
<dbReference type="Gene3D" id="3.90.640.10">
    <property type="entry name" value="Actin, Chain A, domain 4"/>
    <property type="match status" value="1"/>
</dbReference>
<dbReference type="InterPro" id="IPR004000">
    <property type="entry name" value="Actin"/>
</dbReference>
<dbReference type="InterPro" id="IPR020902">
    <property type="entry name" value="Actin/actin-like_CS"/>
</dbReference>
<dbReference type="InterPro" id="IPR004001">
    <property type="entry name" value="Actin_CS"/>
</dbReference>
<dbReference type="InterPro" id="IPR043129">
    <property type="entry name" value="ATPase_NBD"/>
</dbReference>
<dbReference type="PANTHER" id="PTHR11937">
    <property type="entry name" value="ACTIN"/>
    <property type="match status" value="1"/>
</dbReference>
<dbReference type="Pfam" id="PF00022">
    <property type="entry name" value="Actin"/>
    <property type="match status" value="1"/>
</dbReference>
<dbReference type="PRINTS" id="PR00190">
    <property type="entry name" value="ACTIN"/>
</dbReference>
<dbReference type="SMART" id="SM00268">
    <property type="entry name" value="ACTIN"/>
    <property type="match status" value="1"/>
</dbReference>
<dbReference type="SUPFAM" id="SSF53067">
    <property type="entry name" value="Actin-like ATPase domain"/>
    <property type="match status" value="2"/>
</dbReference>
<dbReference type="PROSITE" id="PS00406">
    <property type="entry name" value="ACTINS_1"/>
    <property type="match status" value="1"/>
</dbReference>
<dbReference type="PROSITE" id="PS00432">
    <property type="entry name" value="ACTINS_2"/>
    <property type="match status" value="1"/>
</dbReference>
<dbReference type="PROSITE" id="PS01132">
    <property type="entry name" value="ACTINS_ACT_LIKE"/>
    <property type="match status" value="1"/>
</dbReference>
<gene>
    <name type="primary">ACTA2</name>
    <name type="synonym">ACTSA</name>
    <name type="synonym">ACTVS</name>
</gene>
<organism>
    <name type="scientific">Oryctolagus cuniculus</name>
    <name type="common">Rabbit</name>
    <dbReference type="NCBI Taxonomy" id="9986"/>
    <lineage>
        <taxon>Eukaryota</taxon>
        <taxon>Metazoa</taxon>
        <taxon>Chordata</taxon>
        <taxon>Craniata</taxon>
        <taxon>Vertebrata</taxon>
        <taxon>Euteleostomi</taxon>
        <taxon>Mammalia</taxon>
        <taxon>Eutheria</taxon>
        <taxon>Euarchontoglires</taxon>
        <taxon>Glires</taxon>
        <taxon>Lagomorpha</taxon>
        <taxon>Leporidae</taxon>
        <taxon>Oryctolagus</taxon>
    </lineage>
</organism>
<keyword id="KW-0007">Acetylation</keyword>
<keyword id="KW-0067">ATP-binding</keyword>
<keyword id="KW-0963">Cytoplasm</keyword>
<keyword id="KW-0206">Cytoskeleton</keyword>
<keyword id="KW-0378">Hydrolase</keyword>
<keyword id="KW-0488">Methylation</keyword>
<keyword id="KW-0514">Muscle protein</keyword>
<keyword id="KW-0547">Nucleotide-binding</keyword>
<keyword id="KW-0558">Oxidation</keyword>
<keyword id="KW-1185">Reference proteome</keyword>
<sequence>MCEEEDSTALVCDNGSGLCKAGFAGDDAPRAVFPSIVGRPRHQGVMVGMGQKDSYVGDEAQSKRGILTLKYPIEHGIITNWDDMEKIWHHSFYNELRVAPEEHPTLLTEAPLNPKANREKMTQIMFETFNVPAMYVAIQAVLSLYASGRTTGIVLDSGDGVTHNVPIYEGYALPHAIMRLDLAGRDLTDYLMKILTERGYSFVTTAEREIVRDIKEKLCYVALDFENEMATAASSSSLEKSYELPDGQVITIGNERFRCPETLFQPSFIGMESAGIHETTYNSIMKCDIDIRKDLYANNVLSGGTTMYPGIADRMQKEITALAPSTMKIKIIAPPERKYSVWIGGSILASLSTFQQMWISKQEYDEAGPSIVHRKCF</sequence>
<reference key="1">
    <citation type="journal article" date="1992" name="Gene">
        <title>Nucleotide sequences of the rabbit alpha-smooth-muscle and beta-non-muscle actin mRNAs.</title>
        <authorList>
            <person name="Harris D.E."/>
            <person name="Warshaw D.M."/>
            <person name="Periasamy M."/>
        </authorList>
    </citation>
    <scope>NUCLEOTIDE SEQUENCE [MRNA]</scope>
    <source>
        <strain>New Zealand white</strain>
        <tissue>Uterus</tissue>
    </source>
</reference>
<protein>
    <recommendedName>
        <fullName>Actin, aortic smooth muscle</fullName>
        <ecNumber evidence="6">3.6.4.-</ecNumber>
    </recommendedName>
    <alternativeName>
        <fullName>Alpha-actin-2</fullName>
    </alternativeName>
    <component>
        <recommendedName>
            <fullName>Actin, aortic smooth muscle, intermediate form</fullName>
        </recommendedName>
    </component>
</protein>
<name>ACTA_RABIT</name>
<evidence type="ECO:0000250" key="1"/>
<evidence type="ECO:0000250" key="2">
    <source>
        <dbReference type="UniProtKB" id="P62736"/>
    </source>
</evidence>
<evidence type="ECO:0000250" key="3">
    <source>
        <dbReference type="UniProtKB" id="P62737"/>
    </source>
</evidence>
<evidence type="ECO:0000250" key="4">
    <source>
        <dbReference type="UniProtKB" id="P62739"/>
    </source>
</evidence>
<evidence type="ECO:0000250" key="5">
    <source>
        <dbReference type="UniProtKB" id="P68032"/>
    </source>
</evidence>
<evidence type="ECO:0000250" key="6">
    <source>
        <dbReference type="UniProtKB" id="P68137"/>
    </source>
</evidence>
<evidence type="ECO:0000305" key="7"/>